<reference evidence="8" key="1">
    <citation type="journal article" date="2019" name="Ecol. Evol.">
        <title>The draft genome of Actinia tenebrosa reveals insights into toxin evolution.</title>
        <authorList>
            <person name="Surm J.M."/>
            <person name="Stewart Z.K."/>
            <person name="Papanicolaou A."/>
            <person name="Pavasovic A."/>
            <person name="Prentis P.J."/>
        </authorList>
    </citation>
    <scope>NUCLEOTIDE SEQUENCE [LARGE SCALE GENOMIC DNA]</scope>
</reference>
<reference key="2">
    <citation type="journal article" date="1990" name="Toxicon">
        <title>Purification and characterisation of proteins with cardiac stimulatory and haemolytic activity from the anemone Actinia tenebrosa.</title>
        <authorList>
            <person name="Norton R.S."/>
            <person name="Bobek G."/>
            <person name="Ivanov J.O."/>
            <person name="Thomson M."/>
            <person name="Fiala-Beer E."/>
            <person name="Moritz R.L."/>
            <person name="Simpson R.J."/>
        </authorList>
    </citation>
    <scope>PROTEIN SEQUENCE OF 36-55</scope>
</reference>
<reference key="3">
    <citation type="journal article" date="2009" name="Toxicon">
        <title>Molecular mechanism of pore formation by actinoporins.</title>
        <authorList>
            <person name="Kristan K.C."/>
            <person name="Viero G."/>
            <person name="Dalla Serra M."/>
            <person name="Macek P."/>
            <person name="Anderluh G."/>
        </authorList>
    </citation>
    <scope>REVIEW</scope>
</reference>
<organism>
    <name type="scientific">Actinia tenebrosa</name>
    <name type="common">Australian red waratah sea anemone</name>
    <dbReference type="NCBI Taxonomy" id="6105"/>
    <lineage>
        <taxon>Eukaryota</taxon>
        <taxon>Metazoa</taxon>
        <taxon>Cnidaria</taxon>
        <taxon>Anthozoa</taxon>
        <taxon>Hexacorallia</taxon>
        <taxon>Actiniaria</taxon>
        <taxon>Actiniidae</taxon>
        <taxon>Actinia</taxon>
    </lineage>
</organism>
<dbReference type="PIR" id="B34016">
    <property type="entry name" value="B34016"/>
</dbReference>
<dbReference type="RefSeq" id="XP_031563888.1">
    <property type="nucleotide sequence ID" value="XM_031708028.1"/>
</dbReference>
<dbReference type="SMR" id="P30834"/>
<dbReference type="EnsemblMetazoa" id="XM_031708028.1">
    <property type="protein sequence ID" value="XP_031563888.1"/>
    <property type="gene ID" value="LOC116299377"/>
</dbReference>
<dbReference type="GeneID" id="116299377"/>
<dbReference type="InParanoid" id="P30834"/>
<dbReference type="OrthoDB" id="5954752at2759"/>
<dbReference type="Proteomes" id="UP000515163">
    <property type="component" value="Unplaced"/>
</dbReference>
<dbReference type="GO" id="GO:0005576">
    <property type="term" value="C:extracellular region"/>
    <property type="evidence" value="ECO:0007669"/>
    <property type="project" value="UniProtKB-SubCell"/>
</dbReference>
<dbReference type="GO" id="GO:0042151">
    <property type="term" value="C:nematocyst"/>
    <property type="evidence" value="ECO:0007669"/>
    <property type="project" value="UniProtKB-SubCell"/>
</dbReference>
<dbReference type="GO" id="GO:0044218">
    <property type="term" value="C:other organism cell membrane"/>
    <property type="evidence" value="ECO:0007669"/>
    <property type="project" value="UniProtKB-KW"/>
</dbReference>
<dbReference type="GO" id="GO:0046930">
    <property type="term" value="C:pore complex"/>
    <property type="evidence" value="ECO:0007669"/>
    <property type="project" value="InterPro"/>
</dbReference>
<dbReference type="GO" id="GO:0015267">
    <property type="term" value="F:channel activity"/>
    <property type="evidence" value="ECO:0007669"/>
    <property type="project" value="InterPro"/>
</dbReference>
<dbReference type="GO" id="GO:0090729">
    <property type="term" value="F:toxin activity"/>
    <property type="evidence" value="ECO:0007669"/>
    <property type="project" value="UniProtKB-KW"/>
</dbReference>
<dbReference type="GO" id="GO:0051715">
    <property type="term" value="P:cytolysis in another organism"/>
    <property type="evidence" value="ECO:0007669"/>
    <property type="project" value="InterPro"/>
</dbReference>
<dbReference type="GO" id="GO:0006812">
    <property type="term" value="P:monoatomic cation transport"/>
    <property type="evidence" value="ECO:0007669"/>
    <property type="project" value="InterPro"/>
</dbReference>
<dbReference type="GO" id="GO:0046931">
    <property type="term" value="P:pore complex assembly"/>
    <property type="evidence" value="ECO:0007669"/>
    <property type="project" value="InterPro"/>
</dbReference>
<dbReference type="FunFam" id="2.60.270.20:FF:000001">
    <property type="entry name" value="DELTA-actitoxin-Afr1a"/>
    <property type="match status" value="1"/>
</dbReference>
<dbReference type="Gene3D" id="2.60.270.20">
    <property type="entry name" value="Cytolysin/lectin"/>
    <property type="match status" value="1"/>
</dbReference>
<dbReference type="InterPro" id="IPR050677">
    <property type="entry name" value="Actinoporin_PFT"/>
</dbReference>
<dbReference type="InterPro" id="IPR009104">
    <property type="entry name" value="Anemon_actinoporin-like"/>
</dbReference>
<dbReference type="InterPro" id="IPR015926">
    <property type="entry name" value="Cytolysin/lectin"/>
</dbReference>
<dbReference type="PANTHER" id="PTHR40388">
    <property type="entry name" value="BRYOPORIN"/>
    <property type="match status" value="1"/>
</dbReference>
<dbReference type="PANTHER" id="PTHR40388:SF1">
    <property type="entry name" value="BRYOPORIN"/>
    <property type="match status" value="1"/>
</dbReference>
<dbReference type="Pfam" id="PF06369">
    <property type="entry name" value="Anemone_cytotox"/>
    <property type="match status" value="1"/>
</dbReference>
<dbReference type="SUPFAM" id="SSF63724">
    <property type="entry name" value="Cytolysin/lectin"/>
    <property type="match status" value="1"/>
</dbReference>
<comment type="function">
    <text>Pore-forming protein that forms cations-selective hydrophilic pores of around 1 nm and causes cardiac stimulation and cytolysis. Pore formation is a multi-step process that involves specific recognition of membrane sphingomyelin (but neither cholesterol nor phosphatidylcholine) using aromatic rich region and adjacent phosphocholine (POC) binding site, firm binding to the membrane (mainly driven by hydrophobic interactions) accompanied by the transfer of the N-terminal region to the lipid-water interface and finally pore formation after oligomerization of monomers.</text>
</comment>
<comment type="subunit">
    <text evidence="1">Octamer or nonamer in membranes. Monomer in the soluble state.</text>
</comment>
<comment type="subcellular location">
    <subcellularLocation>
        <location evidence="1">Secreted</location>
    </subcellularLocation>
    <subcellularLocation>
        <location evidence="2">Nematocyst</location>
    </subcellularLocation>
    <subcellularLocation>
        <location evidence="1">Target cell membrane</location>
    </subcellularLocation>
    <text evidence="1">Forms an alpha-helical membrane channel in the prey.</text>
</comment>
<comment type="domain">
    <text evidence="3">Composed of a long N-terminal alpha-helix and a core region rich in beta-sheet structures. Before the pore formation, the alpha-helix binds the lipid membrane, partitions into the lipid-water interface and stabilizes the monomeric molecule on the membrane. Finally, it traverses the bilayer, thus forming the transmembrane pore.</text>
</comment>
<comment type="similarity">
    <text evidence="6">Belongs to the actinoporin family. Sea anemone subfamily.</text>
</comment>
<accession>P30834</accession>
<accession>A0A6P8I7C5</accession>
<proteinExistence type="evidence at protein level"/>
<keyword id="KW-0165">Cleavage on pair of basic residues</keyword>
<keyword id="KW-0204">Cytolysis</keyword>
<keyword id="KW-0903">Direct protein sequencing</keyword>
<keyword id="KW-0406">Ion transport</keyword>
<keyword id="KW-0472">Membrane</keyword>
<keyword id="KW-0166">Nematocyst</keyword>
<keyword id="KW-1185">Reference proteome</keyword>
<keyword id="KW-0964">Secreted</keyword>
<keyword id="KW-0732">Signal</keyword>
<keyword id="KW-1052">Target cell membrane</keyword>
<keyword id="KW-1053">Target membrane</keyword>
<keyword id="KW-0800">Toxin</keyword>
<keyword id="KW-0812">Transmembrane</keyword>
<keyword id="KW-0813">Transport</keyword>
<sequence>MNRLIIVFIVVTMICAATALSTKRRINKEEKDEKRSVAVAGAVIEGATLTFNVLQTVLKALGDISRKIAVGIDNESGMTWTAMNTYFRSGTSDIVLPYEVPHGKALLYNGQKDRGPVATGVVGVLAYAMSDGNTLAVLFSIPFDYNLYSNWWNVKVYKGHRRADQRMYEELYYNLSPFRGDNGWHNRDLGYGLTSRGFMNSSGQSILEIHVTKA</sequence>
<evidence type="ECO:0000250" key="1">
    <source>
        <dbReference type="UniProtKB" id="B9W5G6"/>
    </source>
</evidence>
<evidence type="ECO:0000250" key="2">
    <source>
        <dbReference type="UniProtKB" id="P07845"/>
    </source>
</evidence>
<evidence type="ECO:0000250" key="3">
    <source>
        <dbReference type="UniProtKB" id="P61914"/>
    </source>
</evidence>
<evidence type="ECO:0000255" key="4"/>
<evidence type="ECO:0000303" key="5">
    <source>
    </source>
</evidence>
<evidence type="ECO:0000305" key="6"/>
<evidence type="ECO:0000305" key="7">
    <source>
    </source>
</evidence>
<evidence type="ECO:0000312" key="8">
    <source>
        <dbReference type="Proteomes" id="UP000515163"/>
    </source>
</evidence>
<protein>
    <recommendedName>
        <fullName evidence="5">Cytolysin tenebrosin-B</fullName>
    </recommendedName>
    <alternativeName>
        <fullName evidence="6">DELTA-actitoxin</fullName>
    </alternativeName>
</protein>
<feature type="signal peptide" evidence="4">
    <location>
        <begin position="1"/>
        <end position="19"/>
    </location>
</feature>
<feature type="propeptide" id="PRO_0000452708" evidence="7">
    <location>
        <begin position="20"/>
        <end position="35"/>
    </location>
</feature>
<feature type="chain" id="PRO_0000221531" description="Cytolysin tenebrosin-B" evidence="7">
    <location>
        <begin position="36"/>
        <end position="214"/>
    </location>
</feature>
<feature type="region of interest" description="Plays an important role in the hemolytic activity" evidence="2">
    <location>
        <begin position="38"/>
        <end position="47"/>
    </location>
</feature>
<feature type="region of interest" description="N-terminal region" evidence="3">
    <location>
        <begin position="46"/>
        <end position="65"/>
    </location>
</feature>
<feature type="region of interest" description="Trp-rich region, which is important for the binding to lipid membrane" evidence="3">
    <location>
        <begin position="140"/>
        <end position="155"/>
    </location>
</feature>
<feature type="short sequence motif" description="Cell attachment site, crucial for protein stability" evidence="2 4">
    <location>
        <begin position="179"/>
        <end position="181"/>
    </location>
</feature>
<feature type="binding site" evidence="2">
    <location>
        <position position="89"/>
    </location>
    <ligand>
        <name>phosphocholine</name>
        <dbReference type="ChEBI" id="CHEBI:295975"/>
    </ligand>
</feature>
<feature type="binding site" evidence="2">
    <location>
        <position position="122"/>
    </location>
    <ligand>
        <name>phosphocholine</name>
        <dbReference type="ChEBI" id="CHEBI:295975"/>
    </ligand>
</feature>
<feature type="binding site" evidence="2">
    <location>
        <position position="140"/>
    </location>
    <ligand>
        <name>phosphocholine</name>
        <dbReference type="ChEBI" id="CHEBI:295975"/>
    </ligand>
</feature>
<feature type="binding site" evidence="2">
    <location>
        <position position="142"/>
    </location>
    <ligand>
        <name>phosphocholine</name>
        <dbReference type="ChEBI" id="CHEBI:295975"/>
    </ligand>
</feature>
<feature type="binding site" evidence="2">
    <location>
        <position position="168"/>
    </location>
    <ligand>
        <name>phosphocholine</name>
        <dbReference type="ChEBI" id="CHEBI:295975"/>
    </ligand>
</feature>
<feature type="binding site" evidence="2">
    <location>
        <position position="172"/>
    </location>
    <ligand>
        <name>phosphocholine</name>
        <dbReference type="ChEBI" id="CHEBI:295975"/>
    </ligand>
</feature>
<feature type="binding site" evidence="2">
    <location>
        <position position="173"/>
    </location>
    <ligand>
        <name>phosphocholine</name>
        <dbReference type="ChEBI" id="CHEBI:295975"/>
    </ligand>
</feature>
<feature type="site" description="Important in the initial contact with the lipid membrane" evidence="3">
    <location>
        <position position="148"/>
    </location>
</feature>
<feature type="site" description="Interacts with the lipid membrane" evidence="3">
    <location>
        <position position="179"/>
    </location>
</feature>
<feature type="site" description="Interacts with the lipid membrane" evidence="3">
    <location>
        <position position="195"/>
    </location>
</feature>
<name>ACTPB_ACTTE</name>